<name>RL1_MYCCT</name>
<keyword id="KW-0678">Repressor</keyword>
<keyword id="KW-0687">Ribonucleoprotein</keyword>
<keyword id="KW-0689">Ribosomal protein</keyword>
<keyword id="KW-0694">RNA-binding</keyword>
<keyword id="KW-0699">rRNA-binding</keyword>
<keyword id="KW-0810">Translation regulation</keyword>
<keyword id="KW-0820">tRNA-binding</keyword>
<feature type="chain" id="PRO_0000230613" description="Large ribosomal subunit protein uL1">
    <location>
        <begin position="1"/>
        <end position="226"/>
    </location>
</feature>
<reference key="1">
    <citation type="submission" date="2005-09" db="EMBL/GenBank/DDBJ databases">
        <authorList>
            <person name="Glass J.I."/>
            <person name="Lartigue C."/>
            <person name="Pfannkoch C."/>
            <person name="Baden-Tillson H."/>
            <person name="Smith H.O."/>
            <person name="Venter J.C."/>
            <person name="Roske K."/>
            <person name="Wise K.S."/>
            <person name="Calcutt M.J."/>
            <person name="Nelson W.C."/>
            <person name="Nierman W.C."/>
        </authorList>
    </citation>
    <scope>NUCLEOTIDE SEQUENCE [LARGE SCALE GENOMIC DNA]</scope>
    <source>
        <strain>California kid / ATCC 27343 / NCTC 10154</strain>
    </source>
</reference>
<comment type="function">
    <text evidence="1">Binds directly to 23S rRNA. The L1 stalk is quite mobile in the ribosome, and is involved in E site tRNA release.</text>
</comment>
<comment type="function">
    <text evidence="1">Protein L1 is also a translational repressor protein, it controls the translation of the L11 operon by binding to its mRNA.</text>
</comment>
<comment type="subunit">
    <text evidence="1">Part of the 50S ribosomal subunit.</text>
</comment>
<comment type="similarity">
    <text evidence="1">Belongs to the universal ribosomal protein uL1 family.</text>
</comment>
<sequence>MAKISKRFKEALSKVEKNKVYPLNKALDLAKQTATTKFDSTVEVAFNLNIDPRKADQQIRGAVVLPAGTGKTQRVLVLTNTKTKEAEQAKADIVGGEELINRIKNENWFDFDIIVATPEMMAKLGAIGKILGPKGLMPNPKTGTVTMDVAKAVDDIKKGKVEYRADKEGNIHLIIGKVSFEAEKLEENFKAVIDEIRRVKPQTVKGDYIKNITLSTTMGPGIKVEF</sequence>
<dbReference type="EMBL" id="CP000123">
    <property type="protein sequence ID" value="ABC01455.1"/>
    <property type="molecule type" value="Genomic_DNA"/>
</dbReference>
<dbReference type="RefSeq" id="WP_011386966.1">
    <property type="nucleotide sequence ID" value="NC_007633.1"/>
</dbReference>
<dbReference type="SMR" id="Q2ST52"/>
<dbReference type="GeneID" id="23778979"/>
<dbReference type="KEGG" id="mcp:MCAP_0066"/>
<dbReference type="HOGENOM" id="CLU_062853_0_0_14"/>
<dbReference type="PhylomeDB" id="Q2ST52"/>
<dbReference type="Proteomes" id="UP000001928">
    <property type="component" value="Chromosome"/>
</dbReference>
<dbReference type="GO" id="GO:0015934">
    <property type="term" value="C:large ribosomal subunit"/>
    <property type="evidence" value="ECO:0007669"/>
    <property type="project" value="InterPro"/>
</dbReference>
<dbReference type="GO" id="GO:0019843">
    <property type="term" value="F:rRNA binding"/>
    <property type="evidence" value="ECO:0007669"/>
    <property type="project" value="UniProtKB-UniRule"/>
</dbReference>
<dbReference type="GO" id="GO:0003735">
    <property type="term" value="F:structural constituent of ribosome"/>
    <property type="evidence" value="ECO:0007669"/>
    <property type="project" value="InterPro"/>
</dbReference>
<dbReference type="GO" id="GO:0000049">
    <property type="term" value="F:tRNA binding"/>
    <property type="evidence" value="ECO:0007669"/>
    <property type="project" value="UniProtKB-KW"/>
</dbReference>
<dbReference type="GO" id="GO:0006417">
    <property type="term" value="P:regulation of translation"/>
    <property type="evidence" value="ECO:0007669"/>
    <property type="project" value="UniProtKB-KW"/>
</dbReference>
<dbReference type="GO" id="GO:0006412">
    <property type="term" value="P:translation"/>
    <property type="evidence" value="ECO:0007669"/>
    <property type="project" value="UniProtKB-UniRule"/>
</dbReference>
<dbReference type="CDD" id="cd00403">
    <property type="entry name" value="Ribosomal_L1"/>
    <property type="match status" value="1"/>
</dbReference>
<dbReference type="FunFam" id="3.40.50.790:FF:000001">
    <property type="entry name" value="50S ribosomal protein L1"/>
    <property type="match status" value="1"/>
</dbReference>
<dbReference type="Gene3D" id="3.30.190.20">
    <property type="match status" value="1"/>
</dbReference>
<dbReference type="Gene3D" id="3.40.50.790">
    <property type="match status" value="1"/>
</dbReference>
<dbReference type="HAMAP" id="MF_01318_B">
    <property type="entry name" value="Ribosomal_uL1_B"/>
    <property type="match status" value="1"/>
</dbReference>
<dbReference type="InterPro" id="IPR005878">
    <property type="entry name" value="Ribosom_uL1_bac-type"/>
</dbReference>
<dbReference type="InterPro" id="IPR002143">
    <property type="entry name" value="Ribosomal_uL1"/>
</dbReference>
<dbReference type="InterPro" id="IPR023674">
    <property type="entry name" value="Ribosomal_uL1-like"/>
</dbReference>
<dbReference type="InterPro" id="IPR028364">
    <property type="entry name" value="Ribosomal_uL1/biogenesis"/>
</dbReference>
<dbReference type="InterPro" id="IPR016095">
    <property type="entry name" value="Ribosomal_uL1_3-a/b-sand"/>
</dbReference>
<dbReference type="InterPro" id="IPR023673">
    <property type="entry name" value="Ribosomal_uL1_CS"/>
</dbReference>
<dbReference type="NCBIfam" id="TIGR01169">
    <property type="entry name" value="rplA_bact"/>
    <property type="match status" value="1"/>
</dbReference>
<dbReference type="PANTHER" id="PTHR36427">
    <property type="entry name" value="54S RIBOSOMAL PROTEIN L1, MITOCHONDRIAL"/>
    <property type="match status" value="1"/>
</dbReference>
<dbReference type="PANTHER" id="PTHR36427:SF3">
    <property type="entry name" value="LARGE RIBOSOMAL SUBUNIT PROTEIN UL1M"/>
    <property type="match status" value="1"/>
</dbReference>
<dbReference type="Pfam" id="PF00687">
    <property type="entry name" value="Ribosomal_L1"/>
    <property type="match status" value="1"/>
</dbReference>
<dbReference type="PIRSF" id="PIRSF002155">
    <property type="entry name" value="Ribosomal_L1"/>
    <property type="match status" value="1"/>
</dbReference>
<dbReference type="SUPFAM" id="SSF56808">
    <property type="entry name" value="Ribosomal protein L1"/>
    <property type="match status" value="1"/>
</dbReference>
<dbReference type="PROSITE" id="PS01199">
    <property type="entry name" value="RIBOSOMAL_L1"/>
    <property type="match status" value="1"/>
</dbReference>
<evidence type="ECO:0000255" key="1">
    <source>
        <dbReference type="HAMAP-Rule" id="MF_01318"/>
    </source>
</evidence>
<evidence type="ECO:0000305" key="2"/>
<protein>
    <recommendedName>
        <fullName evidence="1">Large ribosomal subunit protein uL1</fullName>
    </recommendedName>
    <alternativeName>
        <fullName evidence="2">50S ribosomal protein L1</fullName>
    </alternativeName>
</protein>
<proteinExistence type="inferred from homology"/>
<accession>Q2ST52</accession>
<gene>
    <name evidence="1" type="primary">rplA</name>
    <name type="ordered locus">MCAP_0066</name>
</gene>
<organism>
    <name type="scientific">Mycoplasma capricolum subsp. capricolum (strain California kid / ATCC 27343 / NCTC 10154)</name>
    <dbReference type="NCBI Taxonomy" id="340047"/>
    <lineage>
        <taxon>Bacteria</taxon>
        <taxon>Bacillati</taxon>
        <taxon>Mycoplasmatota</taxon>
        <taxon>Mollicutes</taxon>
        <taxon>Mycoplasmataceae</taxon>
        <taxon>Mycoplasma</taxon>
    </lineage>
</organism>